<feature type="chain" id="PRO_1000143823" description="Large ribosomal subunit protein bL21">
    <location>
        <begin position="1"/>
        <end position="103"/>
    </location>
</feature>
<keyword id="KW-1185">Reference proteome</keyword>
<keyword id="KW-0687">Ribonucleoprotein</keyword>
<keyword id="KW-0689">Ribosomal protein</keyword>
<keyword id="KW-0694">RNA-binding</keyword>
<keyword id="KW-0699">rRNA-binding</keyword>
<reference key="1">
    <citation type="journal article" date="2009" name="PLoS ONE">
        <title>Non mycobacterial virulence genes in the genome of the emerging pathogen Mycobacterium abscessus.</title>
        <authorList>
            <person name="Ripoll F."/>
            <person name="Pasek S."/>
            <person name="Schenowitz C."/>
            <person name="Dossat C."/>
            <person name="Barbe V."/>
            <person name="Rottman M."/>
            <person name="Macheras E."/>
            <person name="Heym B."/>
            <person name="Herrmann J.L."/>
            <person name="Daffe M."/>
            <person name="Brosch R."/>
            <person name="Risler J.L."/>
            <person name="Gaillard J.L."/>
        </authorList>
    </citation>
    <scope>NUCLEOTIDE SEQUENCE [LARGE SCALE GENOMIC DNA]</scope>
    <source>
        <strain>ATCC 19977 / DSM 44196 / CCUG 20993 / CIP 104536 / JCM 13569 / NCTC 13031 / TMC 1543 / L948</strain>
    </source>
</reference>
<gene>
    <name evidence="1" type="primary">rplU</name>
    <name type="ordered locus">MAB_1610</name>
</gene>
<dbReference type="EMBL" id="CU458896">
    <property type="protein sequence ID" value="CAM61695.1"/>
    <property type="molecule type" value="Genomic_DNA"/>
</dbReference>
<dbReference type="RefSeq" id="WP_005060209.1">
    <property type="nucleotide sequence ID" value="NZ_MLCG01000002.1"/>
</dbReference>
<dbReference type="SMR" id="B1MMY3"/>
<dbReference type="GeneID" id="93378562"/>
<dbReference type="KEGG" id="mab:MAB_1610"/>
<dbReference type="Proteomes" id="UP000007137">
    <property type="component" value="Chromosome"/>
</dbReference>
<dbReference type="GO" id="GO:0005737">
    <property type="term" value="C:cytoplasm"/>
    <property type="evidence" value="ECO:0007669"/>
    <property type="project" value="UniProtKB-ARBA"/>
</dbReference>
<dbReference type="GO" id="GO:1990904">
    <property type="term" value="C:ribonucleoprotein complex"/>
    <property type="evidence" value="ECO:0007669"/>
    <property type="project" value="UniProtKB-KW"/>
</dbReference>
<dbReference type="GO" id="GO:0005840">
    <property type="term" value="C:ribosome"/>
    <property type="evidence" value="ECO:0007669"/>
    <property type="project" value="UniProtKB-KW"/>
</dbReference>
<dbReference type="GO" id="GO:0019843">
    <property type="term" value="F:rRNA binding"/>
    <property type="evidence" value="ECO:0007669"/>
    <property type="project" value="UniProtKB-UniRule"/>
</dbReference>
<dbReference type="GO" id="GO:0003735">
    <property type="term" value="F:structural constituent of ribosome"/>
    <property type="evidence" value="ECO:0007669"/>
    <property type="project" value="InterPro"/>
</dbReference>
<dbReference type="GO" id="GO:0006412">
    <property type="term" value="P:translation"/>
    <property type="evidence" value="ECO:0007669"/>
    <property type="project" value="UniProtKB-UniRule"/>
</dbReference>
<dbReference type="HAMAP" id="MF_01363">
    <property type="entry name" value="Ribosomal_bL21"/>
    <property type="match status" value="1"/>
</dbReference>
<dbReference type="InterPro" id="IPR028909">
    <property type="entry name" value="bL21-like"/>
</dbReference>
<dbReference type="InterPro" id="IPR036164">
    <property type="entry name" value="bL21-like_sf"/>
</dbReference>
<dbReference type="InterPro" id="IPR001787">
    <property type="entry name" value="Ribosomal_bL21"/>
</dbReference>
<dbReference type="InterPro" id="IPR018258">
    <property type="entry name" value="Ribosomal_bL21_CS"/>
</dbReference>
<dbReference type="NCBIfam" id="TIGR00061">
    <property type="entry name" value="L21"/>
    <property type="match status" value="1"/>
</dbReference>
<dbReference type="PANTHER" id="PTHR21349">
    <property type="entry name" value="50S RIBOSOMAL PROTEIN L21"/>
    <property type="match status" value="1"/>
</dbReference>
<dbReference type="PANTHER" id="PTHR21349:SF0">
    <property type="entry name" value="LARGE RIBOSOMAL SUBUNIT PROTEIN BL21M"/>
    <property type="match status" value="1"/>
</dbReference>
<dbReference type="Pfam" id="PF00829">
    <property type="entry name" value="Ribosomal_L21p"/>
    <property type="match status" value="1"/>
</dbReference>
<dbReference type="SUPFAM" id="SSF141091">
    <property type="entry name" value="L21p-like"/>
    <property type="match status" value="1"/>
</dbReference>
<dbReference type="PROSITE" id="PS01169">
    <property type="entry name" value="RIBOSOMAL_L21"/>
    <property type="match status" value="1"/>
</dbReference>
<protein>
    <recommendedName>
        <fullName evidence="1">Large ribosomal subunit protein bL21</fullName>
    </recommendedName>
    <alternativeName>
        <fullName evidence="2">50S ribosomal protein L21</fullName>
    </alternativeName>
</protein>
<evidence type="ECO:0000255" key="1">
    <source>
        <dbReference type="HAMAP-Rule" id="MF_01363"/>
    </source>
</evidence>
<evidence type="ECO:0000305" key="2"/>
<proteinExistence type="inferred from homology"/>
<comment type="function">
    <text evidence="1">This protein binds to 23S rRNA in the presence of protein L20.</text>
</comment>
<comment type="subunit">
    <text evidence="1">Part of the 50S ribosomal subunit. Contacts protein L20.</text>
</comment>
<comment type="similarity">
    <text evidence="1">Belongs to the bacterial ribosomal protein bL21 family.</text>
</comment>
<sequence>MATYAIVKTGGKQYKVAVGDLVKVEKIDSEPGSSVQLPVALVVDGATVTTDADKLAKVAVTGEIVEHTKGPKIRIHKFKNKTGYHKRQGHRQRLTVLKVTGIK</sequence>
<accession>B1MMY3</accession>
<organism>
    <name type="scientific">Mycobacteroides abscessus (strain ATCC 19977 / DSM 44196 / CCUG 20993 / CIP 104536 / JCM 13569 / NCTC 13031 / TMC 1543 / L948)</name>
    <name type="common">Mycobacterium abscessus</name>
    <dbReference type="NCBI Taxonomy" id="561007"/>
    <lineage>
        <taxon>Bacteria</taxon>
        <taxon>Bacillati</taxon>
        <taxon>Actinomycetota</taxon>
        <taxon>Actinomycetes</taxon>
        <taxon>Mycobacteriales</taxon>
        <taxon>Mycobacteriaceae</taxon>
        <taxon>Mycobacteroides</taxon>
        <taxon>Mycobacteroides abscessus</taxon>
    </lineage>
</organism>
<name>RL21_MYCA9</name>